<reference key="1">
    <citation type="journal article" date="1983" name="J. Biochem.">
        <title>Fibrinopeptides A and B of baboons (Papio anubis, Papio hamadryas, and Theropithecus gelada): their amino acid sequences and evolutionary rates and a molecular phylogeny for the baboons.</title>
        <authorList>
            <person name="Nakamura S."/>
            <person name="Takenaka O."/>
            <person name="Takahashi K."/>
        </authorList>
    </citation>
    <scope>PROTEIN SEQUENCE</scope>
</reference>
<gene>
    <name type="primary">FGB</name>
</gene>
<feature type="peptide" id="PRO_0000009082" description="Fibrinopeptide B">
    <location>
        <begin position="1"/>
        <end position="9"/>
    </location>
</feature>
<feature type="non-terminal residue">
    <location>
        <position position="9"/>
    </location>
</feature>
<accession>P19343</accession>
<evidence type="ECO:0000250" key="1">
    <source>
        <dbReference type="UniProtKB" id="E9PV24"/>
    </source>
</evidence>
<evidence type="ECO:0000250" key="2">
    <source>
        <dbReference type="UniProtKB" id="P02675"/>
    </source>
</evidence>
<proteinExistence type="evidence at protein level"/>
<protein>
    <recommendedName>
        <fullName>Fibrinogen beta chain</fullName>
    </recommendedName>
    <component>
        <recommendedName>
            <fullName>Fibrinopeptide B</fullName>
        </recommendedName>
    </component>
</protein>
<sequence>NQEGLFHGR</sequence>
<name>FIBB_PAPHA</name>
<comment type="function">
    <text evidence="1">Cleaved by the protease thrombin to yield monomers which, together with fibrinogen alpha (FGA) and fibrinogen gamma (FGG), polymerize to form an insoluble fibrin matrix. Fibrin has a major function in hemostasis as one of the primary components of blood clots. In addition, functions during the early stages of wound repair to stabilize the lesion and guide cell migration during re-epithelialization. Was originally thought to be essential for platelet aggregation, based on in vitro studies using anticoagulated blood. However subsequent studies have shown that it is not absolutely required for thrombus formation in vivo. Enhances expression of SELP in activated platelets. Maternal fibrinogen is essential for successful pregnancy. Fibrin deposition is also associated with infection, where it protects against IFNG-mediated hemorrhage. May also facilitate the antibacterial immune response via both innate and T-cell mediated pathways.</text>
</comment>
<comment type="subunit">
    <text evidence="2">Heterohexamer; disulfide linked. Contains 2 sets of 3 non-identical chains (alpha, beta and gamma). The 2 heterotrimers are in head to head conformation with the N-termini in a small central domain (By similarity).</text>
</comment>
<comment type="subcellular location">
    <subcellularLocation>
        <location>Secreted</location>
    </subcellularLocation>
</comment>
<comment type="domain">
    <text evidence="2">A long coiled coil structure formed by 3 polypeptide chains connects the central nodule to the C-terminal domains (distal nodules). The long C-terminal ends of the alpha chains fold back, contributing a fourth strand to the coiled coil structure.</text>
</comment>
<comment type="PTM">
    <text>Conversion of fibrinogen to fibrin is triggered by thrombin, which cleaves fibrinopeptides A and B from alpha and beta chains, and thus exposes the N-terminal polymerization sites responsible for the formation of the soft clot.</text>
</comment>
<organism>
    <name type="scientific">Papio hamadryas</name>
    <name type="common">Hamadryas baboon</name>
    <dbReference type="NCBI Taxonomy" id="9557"/>
    <lineage>
        <taxon>Eukaryota</taxon>
        <taxon>Metazoa</taxon>
        <taxon>Chordata</taxon>
        <taxon>Craniata</taxon>
        <taxon>Vertebrata</taxon>
        <taxon>Euteleostomi</taxon>
        <taxon>Mammalia</taxon>
        <taxon>Eutheria</taxon>
        <taxon>Euarchontoglires</taxon>
        <taxon>Primates</taxon>
        <taxon>Haplorrhini</taxon>
        <taxon>Catarrhini</taxon>
        <taxon>Cercopithecidae</taxon>
        <taxon>Cercopithecinae</taxon>
        <taxon>Papio</taxon>
    </lineage>
</organism>
<dbReference type="PIR" id="E28854">
    <property type="entry name" value="E28854"/>
</dbReference>
<dbReference type="GO" id="GO:0005576">
    <property type="term" value="C:extracellular region"/>
    <property type="evidence" value="ECO:0007669"/>
    <property type="project" value="UniProtKB-SubCell"/>
</dbReference>
<dbReference type="GO" id="GO:0002250">
    <property type="term" value="P:adaptive immune response"/>
    <property type="evidence" value="ECO:0007669"/>
    <property type="project" value="UniProtKB-KW"/>
</dbReference>
<dbReference type="GO" id="GO:0007596">
    <property type="term" value="P:blood coagulation"/>
    <property type="evidence" value="ECO:0007669"/>
    <property type="project" value="UniProtKB-KW"/>
</dbReference>
<dbReference type="GO" id="GO:0045087">
    <property type="term" value="P:innate immune response"/>
    <property type="evidence" value="ECO:0007669"/>
    <property type="project" value="UniProtKB-KW"/>
</dbReference>
<keyword id="KW-1064">Adaptive immunity</keyword>
<keyword id="KW-0094">Blood coagulation</keyword>
<keyword id="KW-0175">Coiled coil</keyword>
<keyword id="KW-0903">Direct protein sequencing</keyword>
<keyword id="KW-1015">Disulfide bond</keyword>
<keyword id="KW-0356">Hemostasis</keyword>
<keyword id="KW-0391">Immunity</keyword>
<keyword id="KW-0399">Innate immunity</keyword>
<keyword id="KW-0964">Secreted</keyword>